<sequence length="471" mass="52219">MTNPWIVSLLLGATLVQANLYPPAVLNLGPEVIKKHLTQALENHDATAILQELPLLRGMQDKSGSIPILDSFVNTVLRYIIWMKVTSANILQLVVQPSTYDQELVVRIPLDMVAGLNTPLIKTIVEFQMSTEVQALIRVERSKNGPARLNLSDCSSNESTLRLSLLHKLSFVVNSLAKNVMNLLMPALPQIVKSHLCPVIQQAFDDMYEDFLRLTTAPIALSPGALEFDLLSPAIQDSNILFNLKAKLLDSQARVTNWFNGSATPLMETTPDRAPFSLTVRQDLVNAIVTTLIPQEELVILLRFVIPDVARQLQMDIKEINAEAANKLGPTQMLKIFTHSTPHIVLNEGGATAAQSVVLEVFPTNTDVRPFFSLGIEASYEAQFFIAENRLMLNFNNVSIERIKLMISDIKLFDPEVLKDTLTKILEYTLLPNENGKLRTGIPMSMPKALGYEKAMWSVSKGALKLTPASS</sequence>
<reference evidence="3" key="1">
    <citation type="journal article" date="2004" name="Genome Res.">
        <title>The status, quality, and expansion of the NIH full-length cDNA project: the Mammalian Gene Collection (MGC).</title>
        <authorList>
            <consortium name="The MGC Project Team"/>
        </authorList>
    </citation>
    <scope>NUCLEOTIDE SEQUENCE [LARGE SCALE MRNA]</scope>
    <source>
        <tissue evidence="3">Lung</tissue>
    </source>
</reference>
<name>BPIB1_RAT</name>
<comment type="function">
    <text evidence="1">May play a role in innate immunity in mouth, nose and lungs. Binds bacterial lipopolysaccharide (LPS) and modulates the cellular responses to LPS (By similarity).</text>
</comment>
<comment type="subcellular location">
    <subcellularLocation>
        <location evidence="1">Secreted</location>
    </subcellularLocation>
</comment>
<comment type="similarity">
    <text evidence="2">Belongs to the BPI/LBP/Plunc superfamily. Plunc family.</text>
</comment>
<evidence type="ECO:0000250" key="1"/>
<evidence type="ECO:0000255" key="2"/>
<evidence type="ECO:0000312" key="3">
    <source>
        <dbReference type="EMBL" id="AAI27516.1"/>
    </source>
</evidence>
<protein>
    <recommendedName>
        <fullName>BPI fold-containing family B member 1</fullName>
    </recommendedName>
    <alternativeName>
        <fullName>Long palate, lung and nasal epithelium carcinoma-associated protein 1</fullName>
    </alternativeName>
</protein>
<keyword id="KW-1015">Disulfide bond</keyword>
<keyword id="KW-0325">Glycoprotein</keyword>
<keyword id="KW-0391">Immunity</keyword>
<keyword id="KW-0399">Innate immunity</keyword>
<keyword id="KW-1185">Reference proteome</keyword>
<keyword id="KW-0964">Secreted</keyword>
<keyword id="KW-0732">Signal</keyword>
<organism>
    <name type="scientific">Rattus norvegicus</name>
    <name type="common">Rat</name>
    <dbReference type="NCBI Taxonomy" id="10116"/>
    <lineage>
        <taxon>Eukaryota</taxon>
        <taxon>Metazoa</taxon>
        <taxon>Chordata</taxon>
        <taxon>Craniata</taxon>
        <taxon>Vertebrata</taxon>
        <taxon>Euteleostomi</taxon>
        <taxon>Mammalia</taxon>
        <taxon>Eutheria</taxon>
        <taxon>Euarchontoglires</taxon>
        <taxon>Glires</taxon>
        <taxon>Rodentia</taxon>
        <taxon>Myomorpha</taxon>
        <taxon>Muroidea</taxon>
        <taxon>Muridae</taxon>
        <taxon>Murinae</taxon>
        <taxon>Rattus</taxon>
    </lineage>
</organism>
<gene>
    <name type="primary">Bpifb1</name>
    <name type="synonym">Lplunc1</name>
</gene>
<proteinExistence type="evidence at transcript level"/>
<accession>A0JPN3</accession>
<dbReference type="EMBL" id="BC127515">
    <property type="protein sequence ID" value="AAI27516.1"/>
    <property type="molecule type" value="mRNA"/>
</dbReference>
<dbReference type="RefSeq" id="NP_001071148.2">
    <property type="nucleotide sequence ID" value="NM_001077680.1"/>
</dbReference>
<dbReference type="SMR" id="A0JPN3"/>
<dbReference type="FunCoup" id="A0JPN3">
    <property type="interactions" value="36"/>
</dbReference>
<dbReference type="STRING" id="10116.ENSRNOP00000052209"/>
<dbReference type="GlyCosmos" id="A0JPN3">
    <property type="glycosylation" value="4 sites, No reported glycans"/>
</dbReference>
<dbReference type="GlyGen" id="A0JPN3">
    <property type="glycosylation" value="4 sites"/>
</dbReference>
<dbReference type="iPTMnet" id="A0JPN3"/>
<dbReference type="PhosphoSitePlus" id="A0JPN3"/>
<dbReference type="PaxDb" id="10116-ENSRNOP00000052209"/>
<dbReference type="GeneID" id="499926"/>
<dbReference type="KEGG" id="rno:499926"/>
<dbReference type="UCSC" id="RGD:1563047">
    <property type="organism name" value="rat"/>
</dbReference>
<dbReference type="AGR" id="RGD:1563047"/>
<dbReference type="CTD" id="92747"/>
<dbReference type="RGD" id="1563047">
    <property type="gene designation" value="Bpifb1"/>
</dbReference>
<dbReference type="eggNOG" id="KOG4160">
    <property type="taxonomic scope" value="Eukaryota"/>
</dbReference>
<dbReference type="HOGENOM" id="CLU_050473_0_0_1"/>
<dbReference type="InParanoid" id="A0JPN3"/>
<dbReference type="PhylomeDB" id="A0JPN3"/>
<dbReference type="Reactome" id="R-RNO-6803157">
    <property type="pathway name" value="Antimicrobial peptides"/>
</dbReference>
<dbReference type="PRO" id="PR:A0JPN3"/>
<dbReference type="Proteomes" id="UP000002494">
    <property type="component" value="Unplaced"/>
</dbReference>
<dbReference type="GO" id="GO:0005576">
    <property type="term" value="C:extracellular region"/>
    <property type="evidence" value="ECO:0000266"/>
    <property type="project" value="RGD"/>
</dbReference>
<dbReference type="GO" id="GO:0005615">
    <property type="term" value="C:extracellular space"/>
    <property type="evidence" value="ECO:0007669"/>
    <property type="project" value="InterPro"/>
</dbReference>
<dbReference type="GO" id="GO:0008289">
    <property type="term" value="F:lipid binding"/>
    <property type="evidence" value="ECO:0007669"/>
    <property type="project" value="InterPro"/>
</dbReference>
<dbReference type="GO" id="GO:0002227">
    <property type="term" value="P:innate immune response in mucosa"/>
    <property type="evidence" value="ECO:0000266"/>
    <property type="project" value="RGD"/>
</dbReference>
<dbReference type="GO" id="GO:0034144">
    <property type="term" value="P:negative regulation of toll-like receptor 4 signaling pathway"/>
    <property type="evidence" value="ECO:0000266"/>
    <property type="project" value="RGD"/>
</dbReference>
<dbReference type="CDD" id="cd00025">
    <property type="entry name" value="BPI1"/>
    <property type="match status" value="1"/>
</dbReference>
<dbReference type="CDD" id="cd00026">
    <property type="entry name" value="BPI2"/>
    <property type="match status" value="1"/>
</dbReference>
<dbReference type="Gene3D" id="3.15.10.10">
    <property type="entry name" value="Bactericidal permeability-increasing protein, domain 1"/>
    <property type="match status" value="1"/>
</dbReference>
<dbReference type="Gene3D" id="3.15.20.10">
    <property type="entry name" value="Bactericidal permeability-increasing protein, domain 2"/>
    <property type="match status" value="1"/>
</dbReference>
<dbReference type="InterPro" id="IPR017943">
    <property type="entry name" value="Bactericidal_perm-incr_a/b_dom"/>
</dbReference>
<dbReference type="InterPro" id="IPR021193">
    <property type="entry name" value="Bpifb1"/>
</dbReference>
<dbReference type="InterPro" id="IPR001124">
    <property type="entry name" value="Lipid-bd_serum_glycop_C"/>
</dbReference>
<dbReference type="InterPro" id="IPR017942">
    <property type="entry name" value="Lipid-bd_serum_glycop_N"/>
</dbReference>
<dbReference type="PANTHER" id="PTHR47395">
    <property type="entry name" value="BPI FOLD-CONTAINING FAMILY B MEMBER 1"/>
    <property type="match status" value="1"/>
</dbReference>
<dbReference type="PANTHER" id="PTHR47395:SF1">
    <property type="entry name" value="BPI FOLD-CONTAINING FAMILY B MEMBER 1"/>
    <property type="match status" value="1"/>
</dbReference>
<dbReference type="Pfam" id="PF01273">
    <property type="entry name" value="LBP_BPI_CETP"/>
    <property type="match status" value="1"/>
</dbReference>
<dbReference type="Pfam" id="PF02886">
    <property type="entry name" value="LBP_BPI_CETP_C"/>
    <property type="match status" value="1"/>
</dbReference>
<dbReference type="SMART" id="SM00328">
    <property type="entry name" value="BPI1"/>
    <property type="match status" value="1"/>
</dbReference>
<dbReference type="SUPFAM" id="SSF55394">
    <property type="entry name" value="Bactericidal permeability-increasing protein, BPI"/>
    <property type="match status" value="2"/>
</dbReference>
<feature type="signal peptide" evidence="2">
    <location>
        <begin position="1"/>
        <end position="18"/>
    </location>
</feature>
<feature type="chain" id="PRO_0000274547" description="BPI fold-containing family B member 1">
    <location>
        <begin position="19"/>
        <end position="471"/>
    </location>
</feature>
<feature type="glycosylation site" description="N-linked (GlcNAc...) asparagine" evidence="2">
    <location>
        <position position="150"/>
    </location>
</feature>
<feature type="glycosylation site" description="N-linked (GlcNAc...) asparagine" evidence="2">
    <location>
        <position position="157"/>
    </location>
</feature>
<feature type="glycosylation site" description="N-linked (GlcNAc...) asparagine" evidence="2">
    <location>
        <position position="260"/>
    </location>
</feature>
<feature type="glycosylation site" description="N-linked (GlcNAc...) asparagine" evidence="2">
    <location>
        <position position="397"/>
    </location>
</feature>
<feature type="disulfide bond" evidence="1">
    <location>
        <begin position="154"/>
        <end position="197"/>
    </location>
</feature>